<evidence type="ECO:0000255" key="1">
    <source>
        <dbReference type="HAMAP-Rule" id="MF_00432"/>
    </source>
</evidence>
<gene>
    <name evidence="1" type="primary">petG</name>
</gene>
<feature type="chain" id="PRO_0000355374" description="Cytochrome b6-f complex subunit 5">
    <location>
        <begin position="1"/>
        <end position="37"/>
    </location>
</feature>
<feature type="transmembrane region" description="Helical" evidence="1">
    <location>
        <begin position="5"/>
        <end position="25"/>
    </location>
</feature>
<dbReference type="EMBL" id="EU431223">
    <property type="protein sequence ID" value="ABY86801.1"/>
    <property type="molecule type" value="Genomic_DNA"/>
</dbReference>
<dbReference type="RefSeq" id="YP_001671702.1">
    <property type="nucleotide sequence ID" value="NC_010323.1"/>
</dbReference>
<dbReference type="SMR" id="B1A954"/>
<dbReference type="GeneID" id="5878378"/>
<dbReference type="KEGG" id="cpap:5878378"/>
<dbReference type="OrthoDB" id="35473at2759"/>
<dbReference type="GO" id="GO:0009535">
    <property type="term" value="C:chloroplast thylakoid membrane"/>
    <property type="evidence" value="ECO:0007669"/>
    <property type="project" value="UniProtKB-SubCell"/>
</dbReference>
<dbReference type="GO" id="GO:0009512">
    <property type="term" value="C:cytochrome b6f complex"/>
    <property type="evidence" value="ECO:0007669"/>
    <property type="project" value="InterPro"/>
</dbReference>
<dbReference type="GO" id="GO:0045158">
    <property type="term" value="F:electron transporter, transferring electrons within cytochrome b6/f complex of photosystem II activity"/>
    <property type="evidence" value="ECO:0007669"/>
    <property type="project" value="UniProtKB-UniRule"/>
</dbReference>
<dbReference type="GO" id="GO:0017004">
    <property type="term" value="P:cytochrome complex assembly"/>
    <property type="evidence" value="ECO:0007669"/>
    <property type="project" value="UniProtKB-UniRule"/>
</dbReference>
<dbReference type="GO" id="GO:0015979">
    <property type="term" value="P:photosynthesis"/>
    <property type="evidence" value="ECO:0007669"/>
    <property type="project" value="UniProtKB-KW"/>
</dbReference>
<dbReference type="HAMAP" id="MF_00432">
    <property type="entry name" value="Cytb6_f_PetG"/>
    <property type="match status" value="1"/>
</dbReference>
<dbReference type="InterPro" id="IPR003683">
    <property type="entry name" value="Cyt_6/f_cplx_su5"/>
</dbReference>
<dbReference type="InterPro" id="IPR036099">
    <property type="entry name" value="Cyt_6/f_cplx_su5_sf"/>
</dbReference>
<dbReference type="NCBIfam" id="NF001907">
    <property type="entry name" value="PRK00665.1"/>
    <property type="match status" value="1"/>
</dbReference>
<dbReference type="Pfam" id="PF02529">
    <property type="entry name" value="PetG"/>
    <property type="match status" value="1"/>
</dbReference>
<dbReference type="PIRSF" id="PIRSF000034">
    <property type="entry name" value="Cyt_b6-f_V"/>
    <property type="match status" value="1"/>
</dbReference>
<dbReference type="SUPFAM" id="SSF103446">
    <property type="entry name" value="PetG subunit of the cytochrome b6f complex"/>
    <property type="match status" value="1"/>
</dbReference>
<protein>
    <recommendedName>
        <fullName evidence="1">Cytochrome b6-f complex subunit 5</fullName>
    </recommendedName>
    <alternativeName>
        <fullName evidence="1">Cytochrome b6-f complex subunit PetG</fullName>
    </alternativeName>
    <alternativeName>
        <fullName evidence="1">Cytochrome b6-f complex subunit V</fullName>
    </alternativeName>
</protein>
<comment type="function">
    <text evidence="1">Component of the cytochrome b6-f complex, which mediates electron transfer between photosystem II (PSII) and photosystem I (PSI), cyclic electron flow around PSI, and state transitions. PetG is required for either the stability or assembly of the cytochrome b6-f complex.</text>
</comment>
<comment type="subunit">
    <text evidence="1">The 4 large subunits of the cytochrome b6-f complex are cytochrome b6, subunit IV (17 kDa polypeptide, PetD), cytochrome f and the Rieske protein, while the 4 small subunits are PetG, PetL, PetM and PetN. The complex functions as a dimer.</text>
</comment>
<comment type="subcellular location">
    <subcellularLocation>
        <location evidence="1">Plastid</location>
        <location evidence="1">Chloroplast thylakoid membrane</location>
        <topology evidence="1">Single-pass membrane protein</topology>
    </subcellularLocation>
</comment>
<comment type="similarity">
    <text evidence="1">Belongs to the PetG family.</text>
</comment>
<proteinExistence type="inferred from homology"/>
<name>PETG_CARPA</name>
<geneLocation type="chloroplast"/>
<reference key="1">
    <citation type="journal article" date="2008" name="Nature">
        <title>The draft genome of the transgenic tropical fruit tree papaya (Carica papaya Linnaeus).</title>
        <authorList>
            <person name="Ming R."/>
            <person name="Hou S."/>
            <person name="Feng Y."/>
            <person name="Yu Q."/>
            <person name="Dionne-Laporte A."/>
            <person name="Saw J.H."/>
            <person name="Senin P."/>
            <person name="Wang W."/>
            <person name="Ly B.V."/>
            <person name="Lewis K.L."/>
            <person name="Salzberg S.L."/>
            <person name="Feng L."/>
            <person name="Jones M.R."/>
            <person name="Skelton R.L."/>
            <person name="Murray J.E."/>
            <person name="Chen C."/>
            <person name="Qian W."/>
            <person name="Shen J."/>
            <person name="Du P."/>
            <person name="Eustice M."/>
            <person name="Tong E."/>
            <person name="Tang H."/>
            <person name="Lyons E."/>
            <person name="Paull R.E."/>
            <person name="Michael T.P."/>
            <person name="Wall K."/>
            <person name="Rice D.W."/>
            <person name="Albert H."/>
            <person name="Wang M.L."/>
            <person name="Zhu Y.J."/>
            <person name="Schatz M."/>
            <person name="Nagarajan N."/>
            <person name="Acob R.A."/>
            <person name="Guan P."/>
            <person name="Blas A."/>
            <person name="Wai C.M."/>
            <person name="Ackerman C.M."/>
            <person name="Ren Y."/>
            <person name="Liu C."/>
            <person name="Wang J."/>
            <person name="Wang J."/>
            <person name="Na J.K."/>
            <person name="Shakirov E.V."/>
            <person name="Haas B."/>
            <person name="Thimmapuram J."/>
            <person name="Nelson D."/>
            <person name="Wang X."/>
            <person name="Bowers J.E."/>
            <person name="Gschwend A.R."/>
            <person name="Delcher A.L."/>
            <person name="Singh R."/>
            <person name="Suzuki J.Y."/>
            <person name="Tripathi S."/>
            <person name="Neupane K."/>
            <person name="Wei H."/>
            <person name="Irikura B."/>
            <person name="Paidi M."/>
            <person name="Jiang N."/>
            <person name="Zhang W."/>
            <person name="Presting G."/>
            <person name="Windsor A."/>
            <person name="Navajas-Perez R."/>
            <person name="Torres M.J."/>
            <person name="Feltus F.A."/>
            <person name="Porter B."/>
            <person name="Li Y."/>
            <person name="Burroughs A.M."/>
            <person name="Luo M.C."/>
            <person name="Liu L."/>
            <person name="Christopher D.A."/>
            <person name="Mount S.M."/>
            <person name="Moore P.H."/>
            <person name="Sugimura T."/>
            <person name="Jiang J."/>
            <person name="Schuler M.A."/>
            <person name="Friedman V."/>
            <person name="Mitchell-Olds T."/>
            <person name="Shippen D.E."/>
            <person name="dePamphilis C.W."/>
            <person name="Palmer J.D."/>
            <person name="Freeling M."/>
            <person name="Paterson A.H."/>
            <person name="Gonsalves D."/>
            <person name="Wang L."/>
            <person name="Alam M."/>
        </authorList>
    </citation>
    <scope>NUCLEOTIDE SEQUENCE [LARGE SCALE GENOMIC DNA]</scope>
    <source>
        <strain>cv. SunUp</strain>
    </source>
</reference>
<accession>B1A954</accession>
<sequence>MIEVFLFGIVLGLIPITLAGLFVTAYLQYRRGDQLDL</sequence>
<keyword id="KW-0150">Chloroplast</keyword>
<keyword id="KW-0249">Electron transport</keyword>
<keyword id="KW-0472">Membrane</keyword>
<keyword id="KW-0602">Photosynthesis</keyword>
<keyword id="KW-0934">Plastid</keyword>
<keyword id="KW-0793">Thylakoid</keyword>
<keyword id="KW-0812">Transmembrane</keyword>
<keyword id="KW-1133">Transmembrane helix</keyword>
<keyword id="KW-0813">Transport</keyword>
<organism>
    <name type="scientific">Carica papaya</name>
    <name type="common">Papaya</name>
    <dbReference type="NCBI Taxonomy" id="3649"/>
    <lineage>
        <taxon>Eukaryota</taxon>
        <taxon>Viridiplantae</taxon>
        <taxon>Streptophyta</taxon>
        <taxon>Embryophyta</taxon>
        <taxon>Tracheophyta</taxon>
        <taxon>Spermatophyta</taxon>
        <taxon>Magnoliopsida</taxon>
        <taxon>eudicotyledons</taxon>
        <taxon>Gunneridae</taxon>
        <taxon>Pentapetalae</taxon>
        <taxon>rosids</taxon>
        <taxon>malvids</taxon>
        <taxon>Brassicales</taxon>
        <taxon>Caricaceae</taxon>
        <taxon>Carica</taxon>
    </lineage>
</organism>